<reference key="1">
    <citation type="submission" date="2007-06" db="EMBL/GenBank/DDBJ databases">
        <authorList>
            <person name="Dodson R.J."/>
            <person name="Harkins D."/>
            <person name="Paulsen I.T."/>
        </authorList>
    </citation>
    <scope>NUCLEOTIDE SEQUENCE [LARGE SCALE GENOMIC DNA]</scope>
    <source>
        <strain>DSM 24068 / PA7</strain>
    </source>
</reference>
<name>RRF_PSEP7</name>
<comment type="function">
    <text evidence="1">Responsible for the release of ribosomes from messenger RNA at the termination of protein biosynthesis. May increase the efficiency of translation by recycling ribosomes from one round of translation to another.</text>
</comment>
<comment type="subcellular location">
    <subcellularLocation>
        <location evidence="1">Cytoplasm</location>
    </subcellularLocation>
</comment>
<comment type="similarity">
    <text evidence="1">Belongs to the RRF family.</text>
</comment>
<evidence type="ECO:0000255" key="1">
    <source>
        <dbReference type="HAMAP-Rule" id="MF_00040"/>
    </source>
</evidence>
<feature type="chain" id="PRO_1000003230" description="Ribosome-recycling factor">
    <location>
        <begin position="1"/>
        <end position="185"/>
    </location>
</feature>
<protein>
    <recommendedName>
        <fullName evidence="1">Ribosome-recycling factor</fullName>
        <shortName evidence="1">RRF</shortName>
    </recommendedName>
    <alternativeName>
        <fullName evidence="1">Ribosome-releasing factor</fullName>
    </alternativeName>
</protein>
<proteinExistence type="inferred from homology"/>
<organism>
    <name type="scientific">Pseudomonas paraeruginosa (strain DSM 24068 / PA7)</name>
    <name type="common">Pseudomonas aeruginosa (strain PA7)</name>
    <dbReference type="NCBI Taxonomy" id="381754"/>
    <lineage>
        <taxon>Bacteria</taxon>
        <taxon>Pseudomonadati</taxon>
        <taxon>Pseudomonadota</taxon>
        <taxon>Gammaproteobacteria</taxon>
        <taxon>Pseudomonadales</taxon>
        <taxon>Pseudomonadaceae</taxon>
        <taxon>Pseudomonas</taxon>
        <taxon>Pseudomonas paraeruginosa</taxon>
    </lineage>
</organism>
<dbReference type="EMBL" id="CP000744">
    <property type="protein sequence ID" value="ABR84529.1"/>
    <property type="molecule type" value="Genomic_DNA"/>
</dbReference>
<dbReference type="RefSeq" id="WP_012074694.1">
    <property type="nucleotide sequence ID" value="NC_009656.1"/>
</dbReference>
<dbReference type="BMRB" id="A6V1D5"/>
<dbReference type="SMR" id="A6V1D5"/>
<dbReference type="GeneID" id="77219866"/>
<dbReference type="KEGG" id="pap:PSPA7_1486"/>
<dbReference type="HOGENOM" id="CLU_073981_2_1_6"/>
<dbReference type="Proteomes" id="UP000001582">
    <property type="component" value="Chromosome"/>
</dbReference>
<dbReference type="GO" id="GO:0005829">
    <property type="term" value="C:cytosol"/>
    <property type="evidence" value="ECO:0007669"/>
    <property type="project" value="GOC"/>
</dbReference>
<dbReference type="GO" id="GO:0043023">
    <property type="term" value="F:ribosomal large subunit binding"/>
    <property type="evidence" value="ECO:0007669"/>
    <property type="project" value="TreeGrafter"/>
</dbReference>
<dbReference type="GO" id="GO:0002184">
    <property type="term" value="P:cytoplasmic translational termination"/>
    <property type="evidence" value="ECO:0007669"/>
    <property type="project" value="TreeGrafter"/>
</dbReference>
<dbReference type="CDD" id="cd00520">
    <property type="entry name" value="RRF"/>
    <property type="match status" value="1"/>
</dbReference>
<dbReference type="FunFam" id="1.10.132.20:FF:000001">
    <property type="entry name" value="Ribosome-recycling factor"/>
    <property type="match status" value="1"/>
</dbReference>
<dbReference type="FunFam" id="3.30.1360.40:FF:000001">
    <property type="entry name" value="Ribosome-recycling factor"/>
    <property type="match status" value="1"/>
</dbReference>
<dbReference type="Gene3D" id="3.30.1360.40">
    <property type="match status" value="1"/>
</dbReference>
<dbReference type="Gene3D" id="1.10.132.20">
    <property type="entry name" value="Ribosome-recycling factor"/>
    <property type="match status" value="1"/>
</dbReference>
<dbReference type="HAMAP" id="MF_00040">
    <property type="entry name" value="RRF"/>
    <property type="match status" value="1"/>
</dbReference>
<dbReference type="InterPro" id="IPR002661">
    <property type="entry name" value="Ribosome_recyc_fac"/>
</dbReference>
<dbReference type="InterPro" id="IPR023584">
    <property type="entry name" value="Ribosome_recyc_fac_dom"/>
</dbReference>
<dbReference type="InterPro" id="IPR036191">
    <property type="entry name" value="RRF_sf"/>
</dbReference>
<dbReference type="NCBIfam" id="TIGR00496">
    <property type="entry name" value="frr"/>
    <property type="match status" value="1"/>
</dbReference>
<dbReference type="PANTHER" id="PTHR20982:SF3">
    <property type="entry name" value="MITOCHONDRIAL RIBOSOME RECYCLING FACTOR PSEUDO 1"/>
    <property type="match status" value="1"/>
</dbReference>
<dbReference type="PANTHER" id="PTHR20982">
    <property type="entry name" value="RIBOSOME RECYCLING FACTOR"/>
    <property type="match status" value="1"/>
</dbReference>
<dbReference type="Pfam" id="PF01765">
    <property type="entry name" value="RRF"/>
    <property type="match status" value="1"/>
</dbReference>
<dbReference type="SUPFAM" id="SSF55194">
    <property type="entry name" value="Ribosome recycling factor, RRF"/>
    <property type="match status" value="1"/>
</dbReference>
<keyword id="KW-0963">Cytoplasm</keyword>
<keyword id="KW-0648">Protein biosynthesis</keyword>
<accession>A6V1D5</accession>
<sequence>MINEIKKEAQERMGKTLEALGHAFAKIRTGRAHPSILDSVMVSYYGADTPLRQVANVTVEDSRTLALAVFDKSMIQAVEKAIMTSDLGLNPATAGTTIRVPMPALTEETRKGYTKQARAEAEQARVSVRNIRRDALAQLKDLQKEKEISEDDERRAGDDVQKLTDKFIGEIEKALEAKEADLMAV</sequence>
<gene>
    <name evidence="1" type="primary">frr</name>
    <name type="ordered locus">PSPA7_1486</name>
</gene>